<evidence type="ECO:0000250" key="1"/>
<evidence type="ECO:0000255" key="2">
    <source>
        <dbReference type="PROSITE-ProRule" id="PRU00169"/>
    </source>
</evidence>
<evidence type="ECO:0000255" key="3">
    <source>
        <dbReference type="PROSITE-ProRule" id="PRU00193"/>
    </source>
</evidence>
<reference key="1">
    <citation type="journal article" date="2001" name="Science">
        <title>Mechanisms of evolution in Rickettsia conorii and R. prowazekii.</title>
        <authorList>
            <person name="Ogata H."/>
            <person name="Audic S."/>
            <person name="Renesto-Audiffren P."/>
            <person name="Fournier P.-E."/>
            <person name="Barbe V."/>
            <person name="Samson D."/>
            <person name="Roux V."/>
            <person name="Cossart P."/>
            <person name="Weissenbach J."/>
            <person name="Claverie J.-M."/>
            <person name="Raoult D."/>
        </authorList>
    </citation>
    <scope>NUCLEOTIDE SEQUENCE [LARGE SCALE GENOMIC DNA]</scope>
    <source>
        <strain>ATCC VR-613 / Malish 7</strain>
    </source>
</reference>
<sequence length="474" mass="53567">MSQLDVLIVDDEESIRNLIAANLKDEGFNPKVAANSTQALKILSEKPVSAVVLDIWLQGSEIDGLGILEIIKKRYPLMPVIIISGHGTIETAVNAIKMGAYDYIEKPFNNDKLVILLTRACEVTKLKRENIDLKSKVIDKTELVGECSVTLKYKMAIAKAATSSCRIMIHGKVGSGKELAARLIHKQSKRVNNPFIIFSPTCMTTEKINQELFGELEKQANNKRPTILEFANNGTLYIDEVSNIPIPIQVKLLKFLKDQTITKPCGKNIKIDIKIITGTSKNIQDEVNNGKFLEDLYYRLNVSSLKVPSLYERKEDIPLLVKYFVKQLSKFSGLKERSFADETIAALQSYEWPGNIRQLRNVVEWTLIMNPLTTGNNEIIKPYMIPSEILANSANLTKLEDSFDMLSMPLREAREVFERQYLSAQMSRFNNNISKTSSFVGMERSALHRKLKLLSLHIPPTNRINDEEYEEANA</sequence>
<protein>
    <recommendedName>
        <fullName>Putative response regulator NtrX-like</fullName>
    </recommendedName>
</protein>
<keyword id="KW-0067">ATP-binding</keyword>
<keyword id="KW-0547">Nucleotide-binding</keyword>
<keyword id="KW-0597">Phosphoprotein</keyword>
<keyword id="KW-0804">Transcription</keyword>
<keyword id="KW-0805">Transcription regulation</keyword>
<keyword id="KW-0902">Two-component regulatory system</keyword>
<organism>
    <name type="scientific">Rickettsia conorii (strain ATCC VR-613 / Malish 7)</name>
    <dbReference type="NCBI Taxonomy" id="272944"/>
    <lineage>
        <taxon>Bacteria</taxon>
        <taxon>Pseudomonadati</taxon>
        <taxon>Pseudomonadota</taxon>
        <taxon>Alphaproteobacteria</taxon>
        <taxon>Rickettsiales</taxon>
        <taxon>Rickettsiaceae</taxon>
        <taxon>Rickettsieae</taxon>
        <taxon>Rickettsia</taxon>
        <taxon>spotted fever group</taxon>
    </lineage>
</organism>
<name>NTRXL_RICCN</name>
<comment type="function">
    <text evidence="1">Member of the two-component regulatory system RC0849/RC0948.</text>
</comment>
<feature type="chain" id="PRO_0000282382" description="Putative response regulator NtrX-like">
    <location>
        <begin position="1"/>
        <end position="474"/>
    </location>
</feature>
<feature type="domain" description="Response regulatory" evidence="2">
    <location>
        <begin position="5"/>
        <end position="121"/>
    </location>
</feature>
<feature type="domain" description="Sigma-54 factor interaction" evidence="3">
    <location>
        <begin position="143"/>
        <end position="368"/>
    </location>
</feature>
<feature type="binding site" evidence="3">
    <location>
        <begin position="171"/>
        <end position="178"/>
    </location>
    <ligand>
        <name>ATP</name>
        <dbReference type="ChEBI" id="CHEBI:30616"/>
    </ligand>
</feature>
<feature type="binding site" evidence="3">
    <location>
        <begin position="231"/>
        <end position="240"/>
    </location>
    <ligand>
        <name>ATP</name>
        <dbReference type="ChEBI" id="CHEBI:30616"/>
    </ligand>
</feature>
<feature type="modified residue" description="4-aspartylphosphate" evidence="2">
    <location>
        <position position="54"/>
    </location>
</feature>
<dbReference type="EMBL" id="AE006914">
    <property type="protein sequence ID" value="AAL03387.1"/>
    <property type="molecule type" value="Genomic_DNA"/>
</dbReference>
<dbReference type="PIR" id="A97806">
    <property type="entry name" value="A97806"/>
</dbReference>
<dbReference type="RefSeq" id="WP_010977456.1">
    <property type="nucleotide sequence ID" value="NC_003103.1"/>
</dbReference>
<dbReference type="SMR" id="Q92HC2"/>
<dbReference type="GeneID" id="927813"/>
<dbReference type="KEGG" id="rco:RC0849"/>
<dbReference type="PATRIC" id="fig|272944.4.peg.967"/>
<dbReference type="HOGENOM" id="CLU_000445_0_6_5"/>
<dbReference type="Proteomes" id="UP000000816">
    <property type="component" value="Chromosome"/>
</dbReference>
<dbReference type="GO" id="GO:0005524">
    <property type="term" value="F:ATP binding"/>
    <property type="evidence" value="ECO:0007669"/>
    <property type="project" value="UniProtKB-KW"/>
</dbReference>
<dbReference type="GO" id="GO:0016887">
    <property type="term" value="F:ATP hydrolysis activity"/>
    <property type="evidence" value="ECO:0007669"/>
    <property type="project" value="InterPro"/>
</dbReference>
<dbReference type="GO" id="GO:0043565">
    <property type="term" value="F:sequence-specific DNA binding"/>
    <property type="evidence" value="ECO:0007669"/>
    <property type="project" value="InterPro"/>
</dbReference>
<dbReference type="GO" id="GO:0000160">
    <property type="term" value="P:phosphorelay signal transduction system"/>
    <property type="evidence" value="ECO:0007669"/>
    <property type="project" value="UniProtKB-KW"/>
</dbReference>
<dbReference type="GO" id="GO:0006355">
    <property type="term" value="P:regulation of DNA-templated transcription"/>
    <property type="evidence" value="ECO:0007669"/>
    <property type="project" value="InterPro"/>
</dbReference>
<dbReference type="CDD" id="cd00009">
    <property type="entry name" value="AAA"/>
    <property type="match status" value="1"/>
</dbReference>
<dbReference type="CDD" id="cd17550">
    <property type="entry name" value="REC_NtrX-like"/>
    <property type="match status" value="1"/>
</dbReference>
<dbReference type="FunFam" id="3.40.50.2300:FF:000018">
    <property type="entry name" value="DNA-binding transcriptional regulator NtrC"/>
    <property type="match status" value="1"/>
</dbReference>
<dbReference type="Gene3D" id="1.10.8.60">
    <property type="match status" value="1"/>
</dbReference>
<dbReference type="Gene3D" id="3.40.50.2300">
    <property type="match status" value="1"/>
</dbReference>
<dbReference type="Gene3D" id="1.10.10.60">
    <property type="entry name" value="Homeodomain-like"/>
    <property type="match status" value="1"/>
</dbReference>
<dbReference type="Gene3D" id="3.40.50.300">
    <property type="entry name" value="P-loop containing nucleotide triphosphate hydrolases"/>
    <property type="match status" value="1"/>
</dbReference>
<dbReference type="InterPro" id="IPR003593">
    <property type="entry name" value="AAA+_ATPase"/>
</dbReference>
<dbReference type="InterPro" id="IPR011006">
    <property type="entry name" value="CheY-like_superfamily"/>
</dbReference>
<dbReference type="InterPro" id="IPR009057">
    <property type="entry name" value="Homeodomain-like_sf"/>
</dbReference>
<dbReference type="InterPro" id="IPR002197">
    <property type="entry name" value="HTH_Fis"/>
</dbReference>
<dbReference type="InterPro" id="IPR027417">
    <property type="entry name" value="P-loop_NTPase"/>
</dbReference>
<dbReference type="InterPro" id="IPR001789">
    <property type="entry name" value="Sig_transdc_resp-reg_receiver"/>
</dbReference>
<dbReference type="InterPro" id="IPR002078">
    <property type="entry name" value="Sigma_54_int"/>
</dbReference>
<dbReference type="InterPro" id="IPR025944">
    <property type="entry name" value="Sigma_54_int_dom_CS"/>
</dbReference>
<dbReference type="PANTHER" id="PTHR32071:SF17">
    <property type="entry name" value="TRANSCRIPTIONAL REGULATOR (NTRC FAMILY)"/>
    <property type="match status" value="1"/>
</dbReference>
<dbReference type="PANTHER" id="PTHR32071">
    <property type="entry name" value="TRANSCRIPTIONAL REGULATORY PROTEIN"/>
    <property type="match status" value="1"/>
</dbReference>
<dbReference type="Pfam" id="PF02954">
    <property type="entry name" value="HTH_8"/>
    <property type="match status" value="1"/>
</dbReference>
<dbReference type="Pfam" id="PF00072">
    <property type="entry name" value="Response_reg"/>
    <property type="match status" value="1"/>
</dbReference>
<dbReference type="Pfam" id="PF00158">
    <property type="entry name" value="Sigma54_activat"/>
    <property type="match status" value="1"/>
</dbReference>
<dbReference type="SMART" id="SM00382">
    <property type="entry name" value="AAA"/>
    <property type="match status" value="1"/>
</dbReference>
<dbReference type="SMART" id="SM00448">
    <property type="entry name" value="REC"/>
    <property type="match status" value="1"/>
</dbReference>
<dbReference type="SUPFAM" id="SSF52172">
    <property type="entry name" value="CheY-like"/>
    <property type="match status" value="1"/>
</dbReference>
<dbReference type="SUPFAM" id="SSF46689">
    <property type="entry name" value="Homeodomain-like"/>
    <property type="match status" value="1"/>
</dbReference>
<dbReference type="SUPFAM" id="SSF52540">
    <property type="entry name" value="P-loop containing nucleoside triphosphate hydrolases"/>
    <property type="match status" value="1"/>
</dbReference>
<dbReference type="PROSITE" id="PS50110">
    <property type="entry name" value="RESPONSE_REGULATORY"/>
    <property type="match status" value="1"/>
</dbReference>
<dbReference type="PROSITE" id="PS00688">
    <property type="entry name" value="SIGMA54_INTERACT_3"/>
    <property type="match status" value="1"/>
</dbReference>
<dbReference type="PROSITE" id="PS50045">
    <property type="entry name" value="SIGMA54_INTERACT_4"/>
    <property type="match status" value="1"/>
</dbReference>
<accession>Q92HC2</accession>
<gene>
    <name type="ordered locus">RC0849</name>
</gene>
<proteinExistence type="inferred from homology"/>